<name>H2B_ONCMY</name>
<proteinExistence type="evidence at protein level"/>
<accession>P69069</accession>
<accession>P02282</accession>
<feature type="initiator methionine" description="Removed" evidence="6">
    <location>
        <position position="1"/>
    </location>
</feature>
<feature type="chain" id="PRO_0000071851" description="Histone H2B">
    <location>
        <begin position="2"/>
        <end position="124"/>
    </location>
</feature>
<feature type="region of interest" description="Disordered" evidence="5">
    <location>
        <begin position="1"/>
        <end position="33"/>
    </location>
</feature>
<feature type="compositionally biased region" description="Basic residues" evidence="5">
    <location>
        <begin position="8"/>
        <end position="17"/>
    </location>
</feature>
<feature type="modified residue" description="N6-acetyllysine" evidence="6">
    <location>
        <position position="6"/>
    </location>
</feature>
<feature type="modified residue" description="N6-acetyllysine" evidence="6">
    <location>
        <position position="11"/>
    </location>
</feature>
<feature type="modified residue" description="Phosphoserine" evidence="1">
    <location>
        <position position="13"/>
    </location>
</feature>
<feature type="modified residue" description="N6-acetyllysine" evidence="6">
    <location>
        <position position="14"/>
    </location>
</feature>
<feature type="modified residue" description="N6-acetyllysine" evidence="6">
    <location>
        <position position="19"/>
    </location>
</feature>
<feature type="glycosylation site" description="O-linked (GlcNAc) serine" evidence="4">
    <location>
        <position position="111"/>
    </location>
</feature>
<feature type="cross-link" description="Glycyl lysine isopeptide (Lys-Gly) (interchain with G-Cter in ubiquitin)" evidence="2">
    <location>
        <position position="119"/>
    </location>
</feature>
<feature type="sequence conflict" description="In Ref. 1; CAA26673." evidence="7" ref="1">
    <original>KR</original>
    <variation>RK</variation>
    <location>
        <begin position="29"/>
        <end position="30"/>
    </location>
</feature>
<dbReference type="EMBL" id="X02916">
    <property type="protein sequence ID" value="CAA26673.1"/>
    <property type="molecule type" value="Genomic_DNA"/>
</dbReference>
<dbReference type="PIR" id="A92961">
    <property type="entry name" value="HSTR2B"/>
</dbReference>
<dbReference type="SMR" id="P69069"/>
<dbReference type="iPTMnet" id="P69069"/>
<dbReference type="Proteomes" id="UP000694395">
    <property type="component" value="Unplaced"/>
</dbReference>
<dbReference type="GO" id="GO:0000786">
    <property type="term" value="C:nucleosome"/>
    <property type="evidence" value="ECO:0007669"/>
    <property type="project" value="UniProtKB-KW"/>
</dbReference>
<dbReference type="GO" id="GO:0005634">
    <property type="term" value="C:nucleus"/>
    <property type="evidence" value="ECO:0007669"/>
    <property type="project" value="UniProtKB-SubCell"/>
</dbReference>
<dbReference type="GO" id="GO:0003677">
    <property type="term" value="F:DNA binding"/>
    <property type="evidence" value="ECO:0007669"/>
    <property type="project" value="UniProtKB-KW"/>
</dbReference>
<dbReference type="GO" id="GO:0046982">
    <property type="term" value="F:protein heterodimerization activity"/>
    <property type="evidence" value="ECO:0007669"/>
    <property type="project" value="InterPro"/>
</dbReference>
<dbReference type="GO" id="GO:0030527">
    <property type="term" value="F:structural constituent of chromatin"/>
    <property type="evidence" value="ECO:0007669"/>
    <property type="project" value="InterPro"/>
</dbReference>
<dbReference type="CDD" id="cd22910">
    <property type="entry name" value="HFD_H2B"/>
    <property type="match status" value="1"/>
</dbReference>
<dbReference type="FunFam" id="1.10.20.10:FF:000003">
    <property type="entry name" value="Histone H2B"/>
    <property type="match status" value="1"/>
</dbReference>
<dbReference type="Gene3D" id="1.10.20.10">
    <property type="entry name" value="Histone, subunit A"/>
    <property type="match status" value="1"/>
</dbReference>
<dbReference type="InterPro" id="IPR009072">
    <property type="entry name" value="Histone-fold"/>
</dbReference>
<dbReference type="InterPro" id="IPR007125">
    <property type="entry name" value="Histone_H2A/H2B/H3"/>
</dbReference>
<dbReference type="InterPro" id="IPR000558">
    <property type="entry name" value="Histone_H2B"/>
</dbReference>
<dbReference type="InterPro" id="IPR055333">
    <property type="entry name" value="HISTONE_H2B_site"/>
</dbReference>
<dbReference type="PANTHER" id="PTHR23428">
    <property type="entry name" value="HISTONE H2B"/>
    <property type="match status" value="1"/>
</dbReference>
<dbReference type="Pfam" id="PF00125">
    <property type="entry name" value="Histone"/>
    <property type="match status" value="1"/>
</dbReference>
<dbReference type="PRINTS" id="PR00621">
    <property type="entry name" value="HISTONEH2B"/>
</dbReference>
<dbReference type="SMART" id="SM00427">
    <property type="entry name" value="H2B"/>
    <property type="match status" value="1"/>
</dbReference>
<dbReference type="SUPFAM" id="SSF47113">
    <property type="entry name" value="Histone-fold"/>
    <property type="match status" value="1"/>
</dbReference>
<dbReference type="PROSITE" id="PS00357">
    <property type="entry name" value="HISTONE_H2B"/>
    <property type="match status" value="1"/>
</dbReference>
<protein>
    <recommendedName>
        <fullName>Histone H2B</fullName>
    </recommendedName>
</protein>
<keyword id="KW-0007">Acetylation</keyword>
<keyword id="KW-0158">Chromosome</keyword>
<keyword id="KW-0903">Direct protein sequencing</keyword>
<keyword id="KW-0238">DNA-binding</keyword>
<keyword id="KW-0325">Glycoprotein</keyword>
<keyword id="KW-1017">Isopeptide bond</keyword>
<keyword id="KW-0544">Nucleosome core</keyword>
<keyword id="KW-0539">Nucleus</keyword>
<keyword id="KW-0597">Phosphoprotein</keyword>
<keyword id="KW-0832">Ubl conjugation</keyword>
<reference key="1">
    <citation type="journal article" date="1985" name="J. Mol. Evol.">
        <title>Histone H4 and H2B genes in rainbow trout (Salmo gairdnerii).</title>
        <authorList>
            <person name="Winkfein R.J."/>
            <person name="Connor W."/>
            <person name="Mezquita J."/>
            <person name="Dixon G.H."/>
        </authorList>
    </citation>
    <scope>NUCLEOTIDE SEQUENCE [GENOMIC DNA]</scope>
</reference>
<reference key="2">
    <citation type="journal article" date="1972" name="Proc. Natl. Acad. Sci. U.S.A.">
        <title>Amino-terminal sequences and sites of in vivo acetylation of trout-testis histones 3 and IIb 2.</title>
        <authorList>
            <person name="Candido E.P.M."/>
            <person name="Dixon G.H."/>
        </authorList>
    </citation>
    <scope>PROTEIN SEQUENCE OF 2-23</scope>
    <scope>ACETYLATION AT LYS-6; LYS-11; LYS-14 AND LYS-19</scope>
</reference>
<comment type="function">
    <text>Core component of nucleosome. Nucleosomes wrap and compact DNA into chromatin, limiting DNA accessibility to the cellular machineries which require DNA as a template. Histones thereby play a central role in transcription regulation, DNA repair, DNA replication and chromosomal stability. DNA accessibility is regulated via a complex set of post-translational modifications of histones, also called histone code, and nucleosome remodeling.</text>
</comment>
<comment type="subunit">
    <text>The nucleosome is a histone octamer containing two molecules each of H2A, H2B, H3 and H4 assembled in one H3-H4 heterotetramer and two H2A-H2B heterodimers. The octamer wraps approximately 147 bp of DNA.</text>
</comment>
<comment type="subcellular location">
    <subcellularLocation>
        <location>Nucleus</location>
    </subcellularLocation>
    <subcellularLocation>
        <location>Chromosome</location>
    </subcellularLocation>
</comment>
<comment type="PTM">
    <text evidence="3">Monoubiquitination of Lys-119 by BRE1 gives a specific tag for epigenetic transcriptional activation and is also prerequisite for histone H3 'Lys-4' and 'Lys-79' methylation.</text>
</comment>
<comment type="PTM">
    <text evidence="1">Phosphorylated during apoptosis; which facilitates apoptotic chromatin condensation.</text>
</comment>
<comment type="PTM">
    <text evidence="4">GlcNAcylation at Ser-111 promotes monoubiquitination of Lys-119. It fluctuates in response to extracellular glucose, and associates with transcribed genes (By similarity).</text>
</comment>
<comment type="similarity">
    <text evidence="7">Belongs to the histone H2B family.</text>
</comment>
<evidence type="ECO:0000250" key="1">
    <source>
        <dbReference type="UniProtKB" id="P06900"/>
    </source>
</evidence>
<evidence type="ECO:0000250" key="2">
    <source>
        <dbReference type="UniProtKB" id="P0C1H4"/>
    </source>
</evidence>
<evidence type="ECO:0000250" key="3">
    <source>
        <dbReference type="UniProtKB" id="P33778"/>
    </source>
</evidence>
<evidence type="ECO:0000250" key="4">
    <source>
        <dbReference type="UniProtKB" id="P62807"/>
    </source>
</evidence>
<evidence type="ECO:0000256" key="5">
    <source>
        <dbReference type="SAM" id="MobiDB-lite"/>
    </source>
</evidence>
<evidence type="ECO:0000269" key="6">
    <source>
    </source>
</evidence>
<evidence type="ECO:0000305" key="7"/>
<sequence>MPEPAKSAPKKGSKKAVTKTAGKGGKKRKRSRKESYAIYVYKVLKQVHPDTGISSKAMGIMNSFVNDIFERIAGESSRLAHYNKRSTITSREIQTAVRLLLPGELAKHAVSEGTKAVTKYTSSK</sequence>
<organism>
    <name type="scientific">Oncorhynchus mykiss</name>
    <name type="common">Rainbow trout</name>
    <name type="synonym">Salmo gairdneri</name>
    <dbReference type="NCBI Taxonomy" id="8022"/>
    <lineage>
        <taxon>Eukaryota</taxon>
        <taxon>Metazoa</taxon>
        <taxon>Chordata</taxon>
        <taxon>Craniata</taxon>
        <taxon>Vertebrata</taxon>
        <taxon>Euteleostomi</taxon>
        <taxon>Actinopterygii</taxon>
        <taxon>Neopterygii</taxon>
        <taxon>Teleostei</taxon>
        <taxon>Protacanthopterygii</taxon>
        <taxon>Salmoniformes</taxon>
        <taxon>Salmonidae</taxon>
        <taxon>Salmoninae</taxon>
        <taxon>Oncorhynchus</taxon>
    </lineage>
</organism>